<protein>
    <recommendedName>
        <fullName evidence="2">Cadherin-5</fullName>
    </recommendedName>
    <alternativeName>
        <fullName evidence="2">Vascular endothelial cadherin</fullName>
        <shortName evidence="2">VE-cadherin</shortName>
    </alternativeName>
    <cdAntigenName>CD144</cdAntigenName>
</protein>
<dbReference type="EMBL" id="Y13919">
    <property type="protein sequence ID" value="CAA74225.1"/>
    <property type="molecule type" value="mRNA"/>
</dbReference>
<dbReference type="RefSeq" id="NP_001001649.2">
    <property type="nucleotide sequence ID" value="NM_001001649.2"/>
</dbReference>
<dbReference type="SMR" id="O02840"/>
<dbReference type="FunCoup" id="O02840">
    <property type="interactions" value="191"/>
</dbReference>
<dbReference type="STRING" id="9823.ENSSSCP00000047033"/>
<dbReference type="GlyCosmos" id="O02840">
    <property type="glycosylation" value="6 sites, No reported glycans"/>
</dbReference>
<dbReference type="GlyGen" id="O02840">
    <property type="glycosylation" value="6 sites"/>
</dbReference>
<dbReference type="PeptideAtlas" id="O02840"/>
<dbReference type="Ensembl" id="ENSSSCT00055044391.1">
    <property type="protein sequence ID" value="ENSSSCP00055035372.1"/>
    <property type="gene ID" value="ENSSSCG00055022576.1"/>
</dbReference>
<dbReference type="GeneID" id="414737"/>
<dbReference type="KEGG" id="ssc:414737"/>
<dbReference type="CTD" id="1003"/>
<dbReference type="InParanoid" id="O02840"/>
<dbReference type="OrthoDB" id="6252479at2759"/>
<dbReference type="Proteomes" id="UP000008227">
    <property type="component" value="Unplaced"/>
</dbReference>
<dbReference type="Proteomes" id="UP000314985">
    <property type="component" value="Unplaced"/>
</dbReference>
<dbReference type="Proteomes" id="UP000694570">
    <property type="component" value="Unplaced"/>
</dbReference>
<dbReference type="Proteomes" id="UP000694571">
    <property type="component" value="Unplaced"/>
</dbReference>
<dbReference type="Proteomes" id="UP000694720">
    <property type="component" value="Unplaced"/>
</dbReference>
<dbReference type="Proteomes" id="UP000694722">
    <property type="component" value="Unplaced"/>
</dbReference>
<dbReference type="Proteomes" id="UP000694723">
    <property type="component" value="Unplaced"/>
</dbReference>
<dbReference type="Proteomes" id="UP000694724">
    <property type="component" value="Unplaced"/>
</dbReference>
<dbReference type="Proteomes" id="UP000694725">
    <property type="component" value="Unplaced"/>
</dbReference>
<dbReference type="Proteomes" id="UP000694726">
    <property type="component" value="Unplaced"/>
</dbReference>
<dbReference type="Proteomes" id="UP000694727">
    <property type="component" value="Unplaced"/>
</dbReference>
<dbReference type="Proteomes" id="UP000694728">
    <property type="component" value="Unplaced"/>
</dbReference>
<dbReference type="GO" id="GO:0005912">
    <property type="term" value="C:adherens junction"/>
    <property type="evidence" value="ECO:0000250"/>
    <property type="project" value="UniProtKB"/>
</dbReference>
<dbReference type="GO" id="GO:0005923">
    <property type="term" value="C:bicellular tight junction"/>
    <property type="evidence" value="ECO:0000318"/>
    <property type="project" value="GO_Central"/>
</dbReference>
<dbReference type="GO" id="GO:0016342">
    <property type="term" value="C:catenin complex"/>
    <property type="evidence" value="ECO:0000318"/>
    <property type="project" value="GO_Central"/>
</dbReference>
<dbReference type="GO" id="GO:0030054">
    <property type="term" value="C:cell junction"/>
    <property type="evidence" value="ECO:0000250"/>
    <property type="project" value="UniProtKB"/>
</dbReference>
<dbReference type="GO" id="GO:0005911">
    <property type="term" value="C:cell-cell junction"/>
    <property type="evidence" value="ECO:0000250"/>
    <property type="project" value="UniProtKB"/>
</dbReference>
<dbReference type="GO" id="GO:0005737">
    <property type="term" value="C:cytoplasm"/>
    <property type="evidence" value="ECO:0000250"/>
    <property type="project" value="UniProtKB"/>
</dbReference>
<dbReference type="GO" id="GO:0008013">
    <property type="term" value="F:beta-catenin binding"/>
    <property type="evidence" value="ECO:0000318"/>
    <property type="project" value="GO_Central"/>
</dbReference>
<dbReference type="GO" id="GO:0045296">
    <property type="term" value="F:cadherin binding"/>
    <property type="evidence" value="ECO:0000318"/>
    <property type="project" value="GO_Central"/>
</dbReference>
<dbReference type="GO" id="GO:0005509">
    <property type="term" value="F:calcium ion binding"/>
    <property type="evidence" value="ECO:0007669"/>
    <property type="project" value="InterPro"/>
</dbReference>
<dbReference type="GO" id="GO:0019903">
    <property type="term" value="F:protein phosphatase binding"/>
    <property type="evidence" value="ECO:0000318"/>
    <property type="project" value="GO_Central"/>
</dbReference>
<dbReference type="GO" id="GO:0034332">
    <property type="term" value="P:adherens junction organization"/>
    <property type="evidence" value="ECO:0000318"/>
    <property type="project" value="GO_Central"/>
</dbReference>
<dbReference type="GO" id="GO:0016339">
    <property type="term" value="P:calcium-dependent cell-cell adhesion via plasma membrane cell adhesion molecules"/>
    <property type="evidence" value="ECO:0000318"/>
    <property type="project" value="GO_Central"/>
</dbReference>
<dbReference type="GO" id="GO:0016477">
    <property type="term" value="P:cell migration"/>
    <property type="evidence" value="ECO:0000318"/>
    <property type="project" value="GO_Central"/>
</dbReference>
<dbReference type="GO" id="GO:0000902">
    <property type="term" value="P:cell morphogenesis"/>
    <property type="evidence" value="ECO:0000318"/>
    <property type="project" value="GO_Central"/>
</dbReference>
<dbReference type="GO" id="GO:0044331">
    <property type="term" value="P:cell-cell adhesion mediated by cadherin"/>
    <property type="evidence" value="ECO:0000318"/>
    <property type="project" value="GO_Central"/>
</dbReference>
<dbReference type="GO" id="GO:0007043">
    <property type="term" value="P:cell-cell junction assembly"/>
    <property type="evidence" value="ECO:0000318"/>
    <property type="project" value="GO_Central"/>
</dbReference>
<dbReference type="GO" id="GO:0001886">
    <property type="term" value="P:endothelial cell morphogenesis"/>
    <property type="evidence" value="ECO:0000250"/>
    <property type="project" value="UniProtKB"/>
</dbReference>
<dbReference type="GO" id="GO:0007156">
    <property type="term" value="P:homophilic cell adhesion via plasma membrane adhesion molecules"/>
    <property type="evidence" value="ECO:0007669"/>
    <property type="project" value="InterPro"/>
</dbReference>
<dbReference type="GO" id="GO:1903659">
    <property type="term" value="P:regulation of complement-dependent cytotoxicity"/>
    <property type="evidence" value="ECO:0000315"/>
    <property type="project" value="AgBase"/>
</dbReference>
<dbReference type="GO" id="GO:2000114">
    <property type="term" value="P:regulation of establishment of cell polarity"/>
    <property type="evidence" value="ECO:0000250"/>
    <property type="project" value="UniProtKB"/>
</dbReference>
<dbReference type="CDD" id="cd11304">
    <property type="entry name" value="Cadherin_repeat"/>
    <property type="match status" value="5"/>
</dbReference>
<dbReference type="FunFam" id="2.60.40.60:FF:000012">
    <property type="entry name" value="Cadherin 24"/>
    <property type="match status" value="1"/>
</dbReference>
<dbReference type="FunFam" id="2.60.40.60:FF:000017">
    <property type="entry name" value="Cadherin 24"/>
    <property type="match status" value="1"/>
</dbReference>
<dbReference type="FunFam" id="2.60.40.60:FF:000217">
    <property type="entry name" value="Cadherin 5"/>
    <property type="match status" value="1"/>
</dbReference>
<dbReference type="FunFam" id="2.60.40.60:FF:000219">
    <property type="entry name" value="Cadherin 5"/>
    <property type="match status" value="1"/>
</dbReference>
<dbReference type="FunFam" id="4.10.900.10:FF:000008">
    <property type="entry name" value="Cadherin 5"/>
    <property type="match status" value="1"/>
</dbReference>
<dbReference type="FunFam" id="2.60.40.60:FF:000014">
    <property type="entry name" value="Cadherin 8"/>
    <property type="match status" value="1"/>
</dbReference>
<dbReference type="Gene3D" id="2.60.40.60">
    <property type="entry name" value="Cadherins"/>
    <property type="match status" value="5"/>
</dbReference>
<dbReference type="Gene3D" id="4.10.900.10">
    <property type="entry name" value="TCF3-CBD (Catenin binding domain)"/>
    <property type="match status" value="1"/>
</dbReference>
<dbReference type="InterPro" id="IPR039808">
    <property type="entry name" value="Cadherin"/>
</dbReference>
<dbReference type="InterPro" id="IPR002126">
    <property type="entry name" value="Cadherin-like_dom"/>
</dbReference>
<dbReference type="InterPro" id="IPR015919">
    <property type="entry name" value="Cadherin-like_sf"/>
</dbReference>
<dbReference type="InterPro" id="IPR020894">
    <property type="entry name" value="Cadherin_CS"/>
</dbReference>
<dbReference type="InterPro" id="IPR000233">
    <property type="entry name" value="Cadherin_Y-type_LIR"/>
</dbReference>
<dbReference type="InterPro" id="IPR027397">
    <property type="entry name" value="Catenin-bd_sf"/>
</dbReference>
<dbReference type="PANTHER" id="PTHR24027">
    <property type="entry name" value="CADHERIN-23"/>
    <property type="match status" value="1"/>
</dbReference>
<dbReference type="PANTHER" id="PTHR24027:SF89">
    <property type="entry name" value="CADHERIN-5"/>
    <property type="match status" value="1"/>
</dbReference>
<dbReference type="Pfam" id="PF01049">
    <property type="entry name" value="CADH_Y-type_LIR"/>
    <property type="match status" value="1"/>
</dbReference>
<dbReference type="Pfam" id="PF00028">
    <property type="entry name" value="Cadherin"/>
    <property type="match status" value="5"/>
</dbReference>
<dbReference type="PRINTS" id="PR00205">
    <property type="entry name" value="CADHERIN"/>
</dbReference>
<dbReference type="SMART" id="SM00112">
    <property type="entry name" value="CA"/>
    <property type="match status" value="5"/>
</dbReference>
<dbReference type="SUPFAM" id="SSF49313">
    <property type="entry name" value="Cadherin-like"/>
    <property type="match status" value="5"/>
</dbReference>
<dbReference type="PROSITE" id="PS00232">
    <property type="entry name" value="CADHERIN_1"/>
    <property type="match status" value="3"/>
</dbReference>
<dbReference type="PROSITE" id="PS50268">
    <property type="entry name" value="CADHERIN_2"/>
    <property type="match status" value="5"/>
</dbReference>
<reference key="1">
    <citation type="submission" date="1997-06" db="EMBL/GenBank/DDBJ databases">
        <authorList>
            <person name="Kilshaw P.J."/>
        </authorList>
    </citation>
    <scope>NUCLEOTIDE SEQUENCE [MRNA]</scope>
</reference>
<proteinExistence type="evidence at transcript level"/>
<name>CADH5_PIG</name>
<keyword id="KW-0106">Calcium</keyword>
<keyword id="KW-0130">Cell adhesion</keyword>
<keyword id="KW-0965">Cell junction</keyword>
<keyword id="KW-1003">Cell membrane</keyword>
<keyword id="KW-0165">Cleavage on pair of basic residues</keyword>
<keyword id="KW-0963">Cytoplasm</keyword>
<keyword id="KW-0325">Glycoprotein</keyword>
<keyword id="KW-0472">Membrane</keyword>
<keyword id="KW-0479">Metal-binding</keyword>
<keyword id="KW-0597">Phosphoprotein</keyword>
<keyword id="KW-1185">Reference proteome</keyword>
<keyword id="KW-0677">Repeat</keyword>
<keyword id="KW-0732">Signal</keyword>
<keyword id="KW-0812">Transmembrane</keyword>
<keyword id="KW-1133">Transmembrane helix</keyword>
<sequence>MQVLVMLLAAAGTYLGLLTAPTAASNPGRQDTPSTLPLHRRQKRDWIWNQMHIDEEKNGSLPHYVGKIKSSVNHKNTKYQLKGESAGKVFRVDENTGDVYAFERLDREKIPEYQLVALVVDKNTEKNLESPSSFTIKVHDINDNWPVFTQLVFNASVPEMSVIGTSVIQLTAVDADDPTVADHASVIYRLKEGEEHFRIRGPGLIETASKNLDRETVPMYKIVVETQDAQGLRGDSGTATVFITLQDVNDNFPVFTQTRYTFSVPEDIRVGSPLGSLFVKDPDEPQNRKTKYSIVQGEYRDTFTIEPDPTRNEGIIKPMKPLDYERIQQYSFTIEATDPTIDLRYLSGTSTKNIARVIINVTDVDEPPNFKQPFYHFQLRENEKKPWIGSVLAVDPDAAQRSIGYSIRRTSDKGQFFGINKHGNIYNVKELDREVYPWYNLTVEAKELDSRGTPTGKESIVQVHIEVLDENDNAPEFAKPYEAKVCEDAPQGKLVVQISAIDKDVTPRDVKFKFSLSTEDSNFTLTDNHDNTANITVKHGYFDRERAKVHHLPILISDNGRPSLTGTSTLHVTVCKCNERGEFTLCEEMGAQVGVSIQALVAIFLCILTIAVISLLVYLRRRLRKQARAHGKSVPEIHEQLVTYDEEGGGEMDTTSYDVSVLNSVRHGGAKPPRPALDARPSLYAQVQKPPRHAPGAHAPGEMAAMIEVKKDEADHDGGGPPYDTLHIFGYEGAESIAESLSSLGTDSSDSDIDYDFLNDWGPRFKMLAELYGSDPREELLY</sequence>
<gene>
    <name evidence="2" type="primary">CDH5</name>
</gene>
<evidence type="ECO:0000250" key="1"/>
<evidence type="ECO:0000250" key="2">
    <source>
        <dbReference type="UniProtKB" id="P33151"/>
    </source>
</evidence>
<evidence type="ECO:0000250" key="3">
    <source>
        <dbReference type="UniProtKB" id="P55284"/>
    </source>
</evidence>
<evidence type="ECO:0000250" key="4">
    <source>
        <dbReference type="UniProtKB" id="Q68SP4"/>
    </source>
</evidence>
<evidence type="ECO:0000250" key="5">
    <source>
        <dbReference type="UniProtKB" id="Q8AYD0"/>
    </source>
</evidence>
<evidence type="ECO:0000255" key="6"/>
<evidence type="ECO:0000255" key="7">
    <source>
        <dbReference type="PROSITE-ProRule" id="PRU00043"/>
    </source>
</evidence>
<organism>
    <name type="scientific">Sus scrofa</name>
    <name type="common">Pig</name>
    <dbReference type="NCBI Taxonomy" id="9823"/>
    <lineage>
        <taxon>Eukaryota</taxon>
        <taxon>Metazoa</taxon>
        <taxon>Chordata</taxon>
        <taxon>Craniata</taxon>
        <taxon>Vertebrata</taxon>
        <taxon>Euteleostomi</taxon>
        <taxon>Mammalia</taxon>
        <taxon>Eutheria</taxon>
        <taxon>Laurasiatheria</taxon>
        <taxon>Artiodactyla</taxon>
        <taxon>Suina</taxon>
        <taxon>Suidae</taxon>
        <taxon>Sus</taxon>
    </lineage>
</organism>
<accession>O02840</accession>
<comment type="function">
    <text evidence="2 3 5">Cadherins are calcium-dependent cell adhesion proteins (By similarity). They preferentially interact with themselves in a homophilic manner in connecting cells; cadherins may thus contribute to the sorting of heterogeneous cell types (By similarity). This cadherin may play a important role in endothelial cell biology through control of the cohesion and organization of the intercellular junctions (By similarity). It associates with alpha-catenin forming a link to the cytoskeleton (By similarity). Plays a role in coupling actin fibers to cell junctions in endothelial cells, via acting as a cell junctional complex anchor for AMOTL2 and MAGI1 (By similarity). Acts in concert with KRIT1 and PALS1 to establish and maintain correct endothelial cell polarity and vascular lumen (By similarity). These effects are mediated by recruitment and activation of the Par polarity complex and RAP1B (By similarity). Required for activation of PRKCZ and for localization of phosphorylated PRKCZ, PARD3, TIAM1 and RAP1B to the cell junction (By similarity). Associates with CTNND1/p120-catenin to control CADH5 endocytosis (By similarity).</text>
</comment>
<comment type="subunit">
    <text evidence="2 3">Part of a complex composed of AMOTL2, MAGI1 and CDH5, within the complex AMOTL2 acts as a scaffold protein for the interaction of MAGI1 with CDH5 (By similarity). The complex is required for coupling actin fibers to cell junctions in endothelial cells (By similarity). Within the complex AMOTL2 (via its N-terminus) interacts with CDH5 (By similarity). Interacts (via cadherin 5 domain) with PTPRB (By similarity). Interacts with TRPC4 (By similarity). Interacts with KRIT1 (By similarity). Interacts with PARD3 (By similarity). Interacts with RTN4 (isoform B) (By similarity). Interacts with PALS1; the interaction promotes PALS1 localization to cell junctions and is required for CDH5-mediated vascular lumen formation and endothelial cell (By similarity). Interacts with CTNND1/p120-catenin; the interaction controls CADH5 endocytosis (By similarity).</text>
</comment>
<comment type="subcellular location">
    <subcellularLocation>
        <location evidence="4">Cell junction</location>
        <location evidence="4">Adherens junction</location>
    </subcellularLocation>
    <subcellularLocation>
        <location evidence="2">Cell membrane</location>
        <topology evidence="6">Single-pass type I membrane protein</topology>
    </subcellularLocation>
    <subcellularLocation>
        <location evidence="3">Cytoplasm</location>
    </subcellularLocation>
    <text evidence="2">Found at cell-cell boundaries and probably at cell-matrix boundaries. KRIT1 and CDH5 reciprocally regulate their localization to endothelial cell-cell junctions.</text>
</comment>
<comment type="domain">
    <text evidence="1">Three calcium ions are usually bound at the interface of each cadherin domain and rigidify the connections, imparting a strong curvature to the full-length ectodomain.</text>
</comment>
<comment type="PTM">
    <text evidence="1">Phosphorylated on tyrosine residues by KDR/VEGFR-2. Dephosphorylated by PTPRB (By similarity).</text>
</comment>
<comment type="PTM">
    <text evidence="1">O-glycosylated.</text>
</comment>
<feature type="signal peptide" evidence="6">
    <location>
        <begin position="1"/>
        <end position="22"/>
    </location>
</feature>
<feature type="propeptide" id="PRO_0000003759" evidence="6">
    <location>
        <begin position="23"/>
        <end position="44"/>
    </location>
</feature>
<feature type="chain" id="PRO_0000003760" description="Cadherin-5">
    <location>
        <begin position="45"/>
        <end position="782"/>
    </location>
</feature>
<feature type="topological domain" description="Extracellular" evidence="6">
    <location>
        <begin position="45"/>
        <end position="598"/>
    </location>
</feature>
<feature type="transmembrane region" description="Helical" evidence="6">
    <location>
        <begin position="599"/>
        <end position="619"/>
    </location>
</feature>
<feature type="topological domain" description="Cytoplasmic" evidence="6">
    <location>
        <begin position="620"/>
        <end position="782"/>
    </location>
</feature>
<feature type="domain" description="Cadherin 1" evidence="7">
    <location>
        <begin position="45"/>
        <end position="148"/>
    </location>
</feature>
<feature type="domain" description="Cadherin 2" evidence="7">
    <location>
        <begin position="149"/>
        <end position="255"/>
    </location>
</feature>
<feature type="domain" description="Cadherin 3" evidence="7">
    <location>
        <begin position="256"/>
        <end position="370"/>
    </location>
</feature>
<feature type="domain" description="Cadherin 4" evidence="7">
    <location>
        <begin position="371"/>
        <end position="475"/>
    </location>
</feature>
<feature type="domain" description="Cadherin 5" evidence="7">
    <location>
        <begin position="476"/>
        <end position="592"/>
    </location>
</feature>
<feature type="region of interest" description="Required for interaction with PALS1" evidence="3">
    <location>
        <begin position="620"/>
        <end position="659"/>
    </location>
</feature>
<feature type="binding site" evidence="5">
    <location>
        <position position="55"/>
    </location>
    <ligand>
        <name>Ca(2+)</name>
        <dbReference type="ChEBI" id="CHEBI:29108"/>
        <label>1</label>
    </ligand>
</feature>
<feature type="binding site" evidence="5">
    <location>
        <position position="55"/>
    </location>
    <ligand>
        <name>Ca(2+)</name>
        <dbReference type="ChEBI" id="CHEBI:29108"/>
        <label>2</label>
    </ligand>
</feature>
<feature type="binding site" evidence="5">
    <location>
        <position position="56"/>
    </location>
    <ligand>
        <name>Ca(2+)</name>
        <dbReference type="ChEBI" id="CHEBI:29108"/>
        <label>1</label>
    </ligand>
</feature>
<feature type="binding site" evidence="5">
    <location>
        <position position="106"/>
    </location>
    <ligand>
        <name>Ca(2+)</name>
        <dbReference type="ChEBI" id="CHEBI:29108"/>
        <label>1</label>
    </ligand>
</feature>
<feature type="binding site" evidence="5">
    <location>
        <position position="108"/>
    </location>
    <ligand>
        <name>Ca(2+)</name>
        <dbReference type="ChEBI" id="CHEBI:29108"/>
        <label>1</label>
    </ligand>
</feature>
<feature type="binding site" evidence="5">
    <location>
        <position position="108"/>
    </location>
    <ligand>
        <name>Ca(2+)</name>
        <dbReference type="ChEBI" id="CHEBI:29108"/>
        <label>2</label>
    </ligand>
</feature>
<feature type="binding site" evidence="5">
    <location>
        <position position="140"/>
    </location>
    <ligand>
        <name>Ca(2+)</name>
        <dbReference type="ChEBI" id="CHEBI:29108"/>
        <label>2</label>
    </ligand>
</feature>
<feature type="binding site" evidence="5">
    <location>
        <position position="141"/>
    </location>
    <ligand>
        <name>Ca(2+)</name>
        <dbReference type="ChEBI" id="CHEBI:29108"/>
        <label>2</label>
    </ligand>
</feature>
<feature type="binding site" evidence="5">
    <location>
        <position position="142"/>
    </location>
    <ligand>
        <name>Ca(2+)</name>
        <dbReference type="ChEBI" id="CHEBI:29108"/>
        <label>3</label>
    </ligand>
</feature>
<feature type="binding site" evidence="5">
    <location>
        <position position="143"/>
    </location>
    <ligand>
        <name>Ca(2+)</name>
        <dbReference type="ChEBI" id="CHEBI:29108"/>
        <label>1</label>
    </ligand>
</feature>
<feature type="binding site" evidence="5">
    <location>
        <position position="143"/>
    </location>
    <ligand>
        <name>Ca(2+)</name>
        <dbReference type="ChEBI" id="CHEBI:29108"/>
        <label>2</label>
    </ligand>
</feature>
<feature type="binding site" evidence="5">
    <location>
        <position position="144"/>
    </location>
    <ligand>
        <name>Ca(2+)</name>
        <dbReference type="ChEBI" id="CHEBI:29108"/>
        <label>3</label>
    </ligand>
</feature>
<feature type="binding site" evidence="5">
    <location>
        <position position="174"/>
    </location>
    <ligand>
        <name>Ca(2+)</name>
        <dbReference type="ChEBI" id="CHEBI:29108"/>
        <label>3</label>
    </ligand>
</feature>
<feature type="binding site" evidence="5">
    <location>
        <position position="176"/>
    </location>
    <ligand>
        <name>Ca(2+)</name>
        <dbReference type="ChEBI" id="CHEBI:29108"/>
        <label>2</label>
    </ligand>
</feature>
<feature type="binding site" evidence="5">
    <location>
        <position position="176"/>
    </location>
    <ligand>
        <name>Ca(2+)</name>
        <dbReference type="ChEBI" id="CHEBI:29108"/>
        <label>3</label>
    </ligand>
</feature>
<feature type="binding site" evidence="5">
    <location>
        <position position="183"/>
    </location>
    <ligand>
        <name>Ca(2+)</name>
        <dbReference type="ChEBI" id="CHEBI:29108"/>
        <label>3</label>
    </ligand>
</feature>
<feature type="binding site" evidence="5">
    <location>
        <position position="228"/>
    </location>
    <ligand>
        <name>Ca(2+)</name>
        <dbReference type="ChEBI" id="CHEBI:29108"/>
        <label>3</label>
    </ligand>
</feature>
<feature type="glycosylation site" description="N-linked (GlcNAc...) asparagine" evidence="6">
    <location>
        <position position="58"/>
    </location>
</feature>
<feature type="glycosylation site" description="N-linked (GlcNAc...) asparagine" evidence="6">
    <location>
        <position position="154"/>
    </location>
</feature>
<feature type="glycosylation site" description="N-linked (GlcNAc...) asparagine" evidence="6">
    <location>
        <position position="360"/>
    </location>
</feature>
<feature type="glycosylation site" description="N-linked (GlcNAc...) asparagine" evidence="6">
    <location>
        <position position="440"/>
    </location>
</feature>
<feature type="glycosylation site" description="N-linked (GlcNAc...) asparagine" evidence="6">
    <location>
        <position position="522"/>
    </location>
</feature>
<feature type="glycosylation site" description="N-linked (GlcNAc...) asparagine" evidence="6">
    <location>
        <position position="534"/>
    </location>
</feature>